<organism>
    <name type="scientific">Aeropyrum pernix (strain ATCC 700893 / DSM 11879 / JCM 9820 / NBRC 100138 / K1)</name>
    <dbReference type="NCBI Taxonomy" id="272557"/>
    <lineage>
        <taxon>Archaea</taxon>
        <taxon>Thermoproteota</taxon>
        <taxon>Thermoprotei</taxon>
        <taxon>Desulfurococcales</taxon>
        <taxon>Desulfurococcaceae</taxon>
        <taxon>Aeropyrum</taxon>
    </lineage>
</organism>
<dbReference type="EC" id="2.4.2.10" evidence="1"/>
<dbReference type="EMBL" id="BA000002">
    <property type="protein sequence ID" value="BAA81362.2"/>
    <property type="molecule type" value="Genomic_DNA"/>
</dbReference>
<dbReference type="PIR" id="B72463">
    <property type="entry name" value="B72463"/>
</dbReference>
<dbReference type="RefSeq" id="WP_010866957.1">
    <property type="nucleotide sequence ID" value="NC_000854.2"/>
</dbReference>
<dbReference type="PDB" id="2YZK">
    <property type="method" value="X-ray"/>
    <property type="resolution" value="1.80 A"/>
    <property type="chains" value="A/B/C/D=10-186"/>
</dbReference>
<dbReference type="PDBsum" id="2YZK"/>
<dbReference type="SMR" id="Q9Y9D8"/>
<dbReference type="STRING" id="272557.APE_2349.1"/>
<dbReference type="EnsemblBacteria" id="BAA81362">
    <property type="protein sequence ID" value="BAA81362"/>
    <property type="gene ID" value="APE_2349.1"/>
</dbReference>
<dbReference type="GeneID" id="1445367"/>
<dbReference type="KEGG" id="ape:APE_2349.1"/>
<dbReference type="eggNOG" id="arCOG00029">
    <property type="taxonomic scope" value="Archaea"/>
</dbReference>
<dbReference type="UniPathway" id="UPA00070">
    <property type="reaction ID" value="UER00119"/>
</dbReference>
<dbReference type="EvolutionaryTrace" id="Q9Y9D8"/>
<dbReference type="Proteomes" id="UP000002518">
    <property type="component" value="Chromosome"/>
</dbReference>
<dbReference type="GO" id="GO:0000287">
    <property type="term" value="F:magnesium ion binding"/>
    <property type="evidence" value="ECO:0007669"/>
    <property type="project" value="UniProtKB-UniRule"/>
</dbReference>
<dbReference type="GO" id="GO:0004588">
    <property type="term" value="F:orotate phosphoribosyltransferase activity"/>
    <property type="evidence" value="ECO:0007669"/>
    <property type="project" value="UniProtKB-UniRule"/>
</dbReference>
<dbReference type="GO" id="GO:0044205">
    <property type="term" value="P:'de novo' UMP biosynthetic process"/>
    <property type="evidence" value="ECO:0007669"/>
    <property type="project" value="UniProtKB-UniRule"/>
</dbReference>
<dbReference type="GO" id="GO:0019856">
    <property type="term" value="P:pyrimidine nucleobase biosynthetic process"/>
    <property type="evidence" value="ECO:0007669"/>
    <property type="project" value="TreeGrafter"/>
</dbReference>
<dbReference type="CDD" id="cd06223">
    <property type="entry name" value="PRTases_typeI"/>
    <property type="match status" value="1"/>
</dbReference>
<dbReference type="Gene3D" id="3.40.50.2020">
    <property type="match status" value="1"/>
</dbReference>
<dbReference type="HAMAP" id="MF_01208">
    <property type="entry name" value="PyrE"/>
    <property type="match status" value="1"/>
</dbReference>
<dbReference type="InterPro" id="IPR023031">
    <property type="entry name" value="OPRT"/>
</dbReference>
<dbReference type="InterPro" id="IPR004467">
    <property type="entry name" value="Or_phspho_trans_dom"/>
</dbReference>
<dbReference type="InterPro" id="IPR000836">
    <property type="entry name" value="PRibTrfase_dom"/>
</dbReference>
<dbReference type="InterPro" id="IPR029057">
    <property type="entry name" value="PRTase-like"/>
</dbReference>
<dbReference type="NCBIfam" id="TIGR00336">
    <property type="entry name" value="pyrE"/>
    <property type="match status" value="1"/>
</dbReference>
<dbReference type="PANTHER" id="PTHR19278">
    <property type="entry name" value="OROTATE PHOSPHORIBOSYLTRANSFERASE"/>
    <property type="match status" value="1"/>
</dbReference>
<dbReference type="PANTHER" id="PTHR19278:SF9">
    <property type="entry name" value="URIDINE 5'-MONOPHOSPHATE SYNTHASE"/>
    <property type="match status" value="1"/>
</dbReference>
<dbReference type="Pfam" id="PF00156">
    <property type="entry name" value="Pribosyltran"/>
    <property type="match status" value="1"/>
</dbReference>
<dbReference type="SUPFAM" id="SSF53271">
    <property type="entry name" value="PRTase-like"/>
    <property type="match status" value="1"/>
</dbReference>
<protein>
    <recommendedName>
        <fullName evidence="1">Orotate phosphoribosyltransferase</fullName>
        <shortName evidence="1">OPRT</shortName>
        <shortName evidence="1">OPRTase</shortName>
        <ecNumber evidence="1">2.4.2.10</ecNumber>
    </recommendedName>
</protein>
<keyword id="KW-0002">3D-structure</keyword>
<keyword id="KW-0328">Glycosyltransferase</keyword>
<keyword id="KW-0460">Magnesium</keyword>
<keyword id="KW-0665">Pyrimidine biosynthesis</keyword>
<keyword id="KW-1185">Reference proteome</keyword>
<keyword id="KW-0808">Transferase</keyword>
<reference key="1">
    <citation type="journal article" date="1999" name="DNA Res.">
        <title>Complete genome sequence of an aerobic hyper-thermophilic crenarchaeon, Aeropyrum pernix K1.</title>
        <authorList>
            <person name="Kawarabayasi Y."/>
            <person name="Hino Y."/>
            <person name="Horikawa H."/>
            <person name="Yamazaki S."/>
            <person name="Haikawa Y."/>
            <person name="Jin-no K."/>
            <person name="Takahashi M."/>
            <person name="Sekine M."/>
            <person name="Baba S."/>
            <person name="Ankai A."/>
            <person name="Kosugi H."/>
            <person name="Hosoyama A."/>
            <person name="Fukui S."/>
            <person name="Nagai Y."/>
            <person name="Nishijima K."/>
            <person name="Nakazawa H."/>
            <person name="Takamiya M."/>
            <person name="Masuda S."/>
            <person name="Funahashi T."/>
            <person name="Tanaka T."/>
            <person name="Kudoh Y."/>
            <person name="Yamazaki J."/>
            <person name="Kushida N."/>
            <person name="Oguchi A."/>
            <person name="Aoki K."/>
            <person name="Kubota K."/>
            <person name="Nakamura Y."/>
            <person name="Nomura N."/>
            <person name="Sako Y."/>
            <person name="Kikuchi H."/>
        </authorList>
    </citation>
    <scope>NUCLEOTIDE SEQUENCE [LARGE SCALE GENOMIC DNA]</scope>
    <source>
        <strain>ATCC 700893 / DSM 11879 / JCM 9820 / NBRC 100138 / K1</strain>
    </source>
</reference>
<sequence length="186" mass="19638">MSHEELAEVLAKVLKKRGAVLRGDFVLSSGRRSSVYIDMRRLLGDESSYSVALDLLLEVGGQDLARSSAVIGVATGGLPWAAMLALRLSKPLGYVRPERKGHGTLSQVEGDPPKGRVVVVDDVATTGTSIAKSIEVLRSNGYTVGTALVLVDRGEGAGELLARMGVRLVSVATLKTILEKLGWGGE</sequence>
<feature type="chain" id="PRO_0000110776" description="Orotate phosphoribosyltransferase">
    <location>
        <begin position="1"/>
        <end position="186"/>
    </location>
</feature>
<feature type="binding site" evidence="1">
    <location>
        <position position="96"/>
    </location>
    <ligand>
        <name>5-phospho-alpha-D-ribose 1-diphosphate</name>
        <dbReference type="ChEBI" id="CHEBI:58017"/>
        <note>ligand shared between dimeric partners</note>
    </ligand>
</feature>
<feature type="binding site" evidence="1">
    <location>
        <position position="100"/>
    </location>
    <ligand>
        <name>5-phospho-alpha-D-ribose 1-diphosphate</name>
        <dbReference type="ChEBI" id="CHEBI:58017"/>
        <note>ligand shared between dimeric partners</note>
    </ligand>
</feature>
<feature type="binding site" evidence="1">
    <location>
        <position position="102"/>
    </location>
    <ligand>
        <name>5-phospho-alpha-D-ribose 1-diphosphate</name>
        <dbReference type="ChEBI" id="CHEBI:58017"/>
        <note>ligand shared between dimeric partners</note>
    </ligand>
</feature>
<feature type="binding site" description="in other chain" evidence="1">
    <location>
        <begin position="121"/>
        <end position="129"/>
    </location>
    <ligand>
        <name>5-phospho-alpha-D-ribose 1-diphosphate</name>
        <dbReference type="ChEBI" id="CHEBI:58017"/>
        <note>ligand shared between dimeric partners</note>
    </ligand>
</feature>
<feature type="binding site" evidence="1">
    <location>
        <position position="125"/>
    </location>
    <ligand>
        <name>orotate</name>
        <dbReference type="ChEBI" id="CHEBI:30839"/>
    </ligand>
</feature>
<feature type="binding site" evidence="1">
    <location>
        <position position="153"/>
    </location>
    <ligand>
        <name>orotate</name>
        <dbReference type="ChEBI" id="CHEBI:30839"/>
    </ligand>
</feature>
<feature type="helix" evidence="2">
    <location>
        <begin position="10"/>
        <end position="16"/>
    </location>
</feature>
<feature type="strand" evidence="2">
    <location>
        <begin position="19"/>
        <end position="26"/>
    </location>
</feature>
<feature type="strand" evidence="2">
    <location>
        <begin position="32"/>
        <end position="37"/>
    </location>
</feature>
<feature type="helix" evidence="2">
    <location>
        <begin position="39"/>
        <end position="42"/>
    </location>
</feature>
<feature type="helix" evidence="2">
    <location>
        <begin position="46"/>
        <end position="66"/>
    </location>
</feature>
<feature type="strand" evidence="2">
    <location>
        <begin position="68"/>
        <end position="73"/>
    </location>
</feature>
<feature type="turn" evidence="2">
    <location>
        <begin position="74"/>
        <end position="77"/>
    </location>
</feature>
<feature type="helix" evidence="2">
    <location>
        <begin position="78"/>
        <end position="88"/>
    </location>
</feature>
<feature type="strand" evidence="2">
    <location>
        <begin position="92"/>
        <end position="95"/>
    </location>
</feature>
<feature type="strand" evidence="2">
    <location>
        <begin position="114"/>
        <end position="127"/>
    </location>
</feature>
<feature type="helix" evidence="2">
    <location>
        <begin position="128"/>
        <end position="139"/>
    </location>
</feature>
<feature type="strand" evidence="2">
    <location>
        <begin position="143"/>
        <end position="152"/>
    </location>
</feature>
<feature type="helix" evidence="2">
    <location>
        <begin position="157"/>
        <end position="162"/>
    </location>
</feature>
<feature type="turn" evidence="2">
    <location>
        <begin position="163"/>
        <end position="165"/>
    </location>
</feature>
<feature type="strand" evidence="2">
    <location>
        <begin position="167"/>
        <end position="173"/>
    </location>
</feature>
<feature type="helix" evidence="2">
    <location>
        <begin position="174"/>
        <end position="180"/>
    </location>
</feature>
<evidence type="ECO:0000255" key="1">
    <source>
        <dbReference type="HAMAP-Rule" id="MF_01208"/>
    </source>
</evidence>
<evidence type="ECO:0007829" key="2">
    <source>
        <dbReference type="PDB" id="2YZK"/>
    </source>
</evidence>
<comment type="function">
    <text evidence="1">Catalyzes the transfer of a ribosyl phosphate group from 5-phosphoribose 1-diphosphate to orotate, leading to the formation of orotidine monophosphate (OMP).</text>
</comment>
<comment type="catalytic activity">
    <reaction evidence="1">
        <text>orotidine 5'-phosphate + diphosphate = orotate + 5-phospho-alpha-D-ribose 1-diphosphate</text>
        <dbReference type="Rhea" id="RHEA:10380"/>
        <dbReference type="ChEBI" id="CHEBI:30839"/>
        <dbReference type="ChEBI" id="CHEBI:33019"/>
        <dbReference type="ChEBI" id="CHEBI:57538"/>
        <dbReference type="ChEBI" id="CHEBI:58017"/>
        <dbReference type="EC" id="2.4.2.10"/>
    </reaction>
</comment>
<comment type="cofactor">
    <cofactor evidence="1">
        <name>Mg(2+)</name>
        <dbReference type="ChEBI" id="CHEBI:18420"/>
    </cofactor>
</comment>
<comment type="pathway">
    <text evidence="1">Pyrimidine metabolism; UMP biosynthesis via de novo pathway; UMP from orotate: step 1/2.</text>
</comment>
<comment type="subunit">
    <text evidence="1">Homodimer.</text>
</comment>
<comment type="similarity">
    <text evidence="1">Belongs to the purine/pyrimidine phosphoribosyltransferase family. PyrE subfamily.</text>
</comment>
<gene>
    <name evidence="1" type="primary">pyrE</name>
    <name type="ordered locus">APE_2349.1</name>
</gene>
<accession>Q9Y9D8</accession>
<proteinExistence type="evidence at protein level"/>
<name>PYRE_AERPE</name>